<comment type="function">
    <text evidence="1">One of the essential components for the initiation of protein synthesis. Stabilizes the binding of IF-2 and IF-3 on the 30S subunit to which N-formylmethionyl-tRNA(fMet) subsequently binds. Helps modulate mRNA selection, yielding the 30S pre-initiation complex (PIC). Upon addition of the 50S ribosomal subunit IF-1, IF-2 and IF-3 are released leaving the mature 70S translation initiation complex.</text>
</comment>
<comment type="subunit">
    <text evidence="1">Component of the 30S ribosomal translation pre-initiation complex which assembles on the 30S ribosome in the order IF-2 and IF-3, IF-1 and N-formylmethionyl-tRNA(fMet); mRNA recruitment can occur at any time during PIC assembly.</text>
</comment>
<comment type="subcellular location">
    <subcellularLocation>
        <location evidence="1">Cytoplasm</location>
    </subcellularLocation>
</comment>
<comment type="similarity">
    <text evidence="1">Belongs to the IF-1 family.</text>
</comment>
<proteinExistence type="inferred from homology"/>
<gene>
    <name evidence="1" type="primary">infA</name>
    <name type="ordered locus">RBE_0144</name>
</gene>
<name>IF1_RICBR</name>
<keyword id="KW-0963">Cytoplasm</keyword>
<keyword id="KW-0396">Initiation factor</keyword>
<keyword id="KW-0648">Protein biosynthesis</keyword>
<keyword id="KW-0694">RNA-binding</keyword>
<keyword id="KW-0699">rRNA-binding</keyword>
<feature type="chain" id="PRO_0000263861" description="Translation initiation factor IF-1">
    <location>
        <begin position="1"/>
        <end position="73"/>
    </location>
</feature>
<feature type="domain" description="S1-like" evidence="1">
    <location>
        <begin position="1"/>
        <end position="72"/>
    </location>
</feature>
<accession>Q1RK89</accession>
<evidence type="ECO:0000255" key="1">
    <source>
        <dbReference type="HAMAP-Rule" id="MF_00075"/>
    </source>
</evidence>
<organism>
    <name type="scientific">Rickettsia bellii (strain RML369-C)</name>
    <dbReference type="NCBI Taxonomy" id="336407"/>
    <lineage>
        <taxon>Bacteria</taxon>
        <taxon>Pseudomonadati</taxon>
        <taxon>Pseudomonadota</taxon>
        <taxon>Alphaproteobacteria</taxon>
        <taxon>Rickettsiales</taxon>
        <taxon>Rickettsiaceae</taxon>
        <taxon>Rickettsieae</taxon>
        <taxon>Rickettsia</taxon>
        <taxon>belli group</taxon>
    </lineage>
</organism>
<sequence length="73" mass="8286">MSKDDLIQFTGTVIELAPNATFRVKLENGHVIIAHTAGRMRKNRIRILLGDKVTVEMTPYDLTKGRVILRHQS</sequence>
<reference key="1">
    <citation type="journal article" date="2006" name="PLoS Genet.">
        <title>Genome sequence of Rickettsia bellii illuminates the role of amoebae in gene exchanges between intracellular pathogens.</title>
        <authorList>
            <person name="Ogata H."/>
            <person name="La Scola B."/>
            <person name="Audic S."/>
            <person name="Renesto P."/>
            <person name="Blanc G."/>
            <person name="Robert C."/>
            <person name="Fournier P.-E."/>
            <person name="Claverie J.-M."/>
            <person name="Raoult D."/>
        </authorList>
    </citation>
    <scope>NUCLEOTIDE SEQUENCE [LARGE SCALE GENOMIC DNA]</scope>
    <source>
        <strain>RML369-C</strain>
    </source>
</reference>
<dbReference type="EMBL" id="CP000087">
    <property type="protein sequence ID" value="ABE04225.1"/>
    <property type="molecule type" value="Genomic_DNA"/>
</dbReference>
<dbReference type="RefSeq" id="WP_011476840.1">
    <property type="nucleotide sequence ID" value="NC_007940.1"/>
</dbReference>
<dbReference type="SMR" id="Q1RK89"/>
<dbReference type="KEGG" id="rbe:RBE_0144"/>
<dbReference type="eggNOG" id="COG0361">
    <property type="taxonomic scope" value="Bacteria"/>
</dbReference>
<dbReference type="HOGENOM" id="CLU_151267_1_0_5"/>
<dbReference type="OrthoDB" id="9803250at2"/>
<dbReference type="Proteomes" id="UP000001951">
    <property type="component" value="Chromosome"/>
</dbReference>
<dbReference type="GO" id="GO:0005829">
    <property type="term" value="C:cytosol"/>
    <property type="evidence" value="ECO:0007669"/>
    <property type="project" value="TreeGrafter"/>
</dbReference>
<dbReference type="GO" id="GO:0043022">
    <property type="term" value="F:ribosome binding"/>
    <property type="evidence" value="ECO:0007669"/>
    <property type="project" value="UniProtKB-UniRule"/>
</dbReference>
<dbReference type="GO" id="GO:0019843">
    <property type="term" value="F:rRNA binding"/>
    <property type="evidence" value="ECO:0007669"/>
    <property type="project" value="UniProtKB-UniRule"/>
</dbReference>
<dbReference type="GO" id="GO:0003743">
    <property type="term" value="F:translation initiation factor activity"/>
    <property type="evidence" value="ECO:0007669"/>
    <property type="project" value="UniProtKB-UniRule"/>
</dbReference>
<dbReference type="CDD" id="cd04451">
    <property type="entry name" value="S1_IF1"/>
    <property type="match status" value="1"/>
</dbReference>
<dbReference type="FunFam" id="2.40.50.140:FF:000002">
    <property type="entry name" value="Translation initiation factor IF-1"/>
    <property type="match status" value="1"/>
</dbReference>
<dbReference type="Gene3D" id="2.40.50.140">
    <property type="entry name" value="Nucleic acid-binding proteins"/>
    <property type="match status" value="1"/>
</dbReference>
<dbReference type="HAMAP" id="MF_00075">
    <property type="entry name" value="IF_1"/>
    <property type="match status" value="1"/>
</dbReference>
<dbReference type="InterPro" id="IPR012340">
    <property type="entry name" value="NA-bd_OB-fold"/>
</dbReference>
<dbReference type="InterPro" id="IPR006196">
    <property type="entry name" value="RNA-binding_domain_S1_IF1"/>
</dbReference>
<dbReference type="InterPro" id="IPR004368">
    <property type="entry name" value="TIF_IF1"/>
</dbReference>
<dbReference type="NCBIfam" id="TIGR00008">
    <property type="entry name" value="infA"/>
    <property type="match status" value="1"/>
</dbReference>
<dbReference type="PANTHER" id="PTHR33370">
    <property type="entry name" value="TRANSLATION INITIATION FACTOR IF-1, CHLOROPLASTIC"/>
    <property type="match status" value="1"/>
</dbReference>
<dbReference type="PANTHER" id="PTHR33370:SF1">
    <property type="entry name" value="TRANSLATION INITIATION FACTOR IF-1, CHLOROPLASTIC"/>
    <property type="match status" value="1"/>
</dbReference>
<dbReference type="Pfam" id="PF01176">
    <property type="entry name" value="eIF-1a"/>
    <property type="match status" value="1"/>
</dbReference>
<dbReference type="SUPFAM" id="SSF50249">
    <property type="entry name" value="Nucleic acid-binding proteins"/>
    <property type="match status" value="1"/>
</dbReference>
<dbReference type="PROSITE" id="PS50832">
    <property type="entry name" value="S1_IF1_TYPE"/>
    <property type="match status" value="1"/>
</dbReference>
<protein>
    <recommendedName>
        <fullName evidence="1">Translation initiation factor IF-1</fullName>
    </recommendedName>
</protein>